<feature type="chain" id="PRO_0000159821" description="Putative tRNA (cytidine(34)-2'-O)-methyltransferase">
    <location>
        <begin position="1"/>
        <end position="157"/>
    </location>
</feature>
<feature type="binding site" evidence="1">
    <location>
        <position position="79"/>
    </location>
    <ligand>
        <name>S-adenosyl-L-methionine</name>
        <dbReference type="ChEBI" id="CHEBI:59789"/>
    </ligand>
</feature>
<feature type="binding site" evidence="1">
    <location>
        <position position="104"/>
    </location>
    <ligand>
        <name>S-adenosyl-L-methionine</name>
        <dbReference type="ChEBI" id="CHEBI:59789"/>
    </ligand>
</feature>
<feature type="binding site" evidence="1">
    <location>
        <position position="125"/>
    </location>
    <ligand>
        <name>S-adenosyl-L-methionine</name>
        <dbReference type="ChEBI" id="CHEBI:59789"/>
    </ligand>
</feature>
<sequence>MALHVVLFQPEIPANTGNIARTCAATNTALHLIRPLGFSTDDKMLRRAGLDYWEFVNIHYYDSLDHFFQQNQNGDFYYITKFGKRYYTSYDFSDPSKEIFFIFGRETTGLPKELLAENEDRCLRIPMTENVRALNLSNTAAILVYEALRQQSFHGLS</sequence>
<name>TRML_GEOSE</name>
<keyword id="KW-0963">Cytoplasm</keyword>
<keyword id="KW-0489">Methyltransferase</keyword>
<keyword id="KW-0949">S-adenosyl-L-methionine</keyword>
<keyword id="KW-0808">Transferase</keyword>
<keyword id="KW-0819">tRNA processing</keyword>
<dbReference type="EC" id="2.1.1.207" evidence="1"/>
<dbReference type="EMBL" id="M65289">
    <property type="protein sequence ID" value="AAA22478.1"/>
    <property type="molecule type" value="Genomic_DNA"/>
</dbReference>
<dbReference type="PIR" id="JS0680">
    <property type="entry name" value="JS0680"/>
</dbReference>
<dbReference type="SMR" id="P32813"/>
<dbReference type="GO" id="GO:0005737">
    <property type="term" value="C:cytoplasm"/>
    <property type="evidence" value="ECO:0007669"/>
    <property type="project" value="UniProtKB-SubCell"/>
</dbReference>
<dbReference type="GO" id="GO:0003723">
    <property type="term" value="F:RNA binding"/>
    <property type="evidence" value="ECO:0007669"/>
    <property type="project" value="InterPro"/>
</dbReference>
<dbReference type="GO" id="GO:0141102">
    <property type="term" value="F:tRNA (5-carboxymethylaminomethyluridine(34)-2'-O)-methyltransferase activity"/>
    <property type="evidence" value="ECO:0007669"/>
    <property type="project" value="RHEA"/>
</dbReference>
<dbReference type="GO" id="GO:0141098">
    <property type="term" value="F:tRNA (cytidine(34)-2'-O)-methyltransferase activity"/>
    <property type="evidence" value="ECO:0007669"/>
    <property type="project" value="RHEA"/>
</dbReference>
<dbReference type="GO" id="GO:0002130">
    <property type="term" value="P:wobble position ribose methylation"/>
    <property type="evidence" value="ECO:0007669"/>
    <property type="project" value="TreeGrafter"/>
</dbReference>
<dbReference type="CDD" id="cd18094">
    <property type="entry name" value="SpoU-like_TrmL"/>
    <property type="match status" value="1"/>
</dbReference>
<dbReference type="FunFam" id="3.40.1280.10:FF:000002">
    <property type="entry name" value="Peptidylprolyl isomerase"/>
    <property type="match status" value="1"/>
</dbReference>
<dbReference type="Gene3D" id="3.40.1280.10">
    <property type="match status" value="1"/>
</dbReference>
<dbReference type="HAMAP" id="MF_01885">
    <property type="entry name" value="tRNA_methyltr_TrmL"/>
    <property type="match status" value="1"/>
</dbReference>
<dbReference type="InterPro" id="IPR029028">
    <property type="entry name" value="Alpha/beta_knot_MTases"/>
</dbReference>
<dbReference type="InterPro" id="IPR001537">
    <property type="entry name" value="SpoU_MeTrfase"/>
</dbReference>
<dbReference type="InterPro" id="IPR016914">
    <property type="entry name" value="TrmL"/>
</dbReference>
<dbReference type="InterPro" id="IPR029026">
    <property type="entry name" value="tRNA_m1G_MTases_N"/>
</dbReference>
<dbReference type="NCBIfam" id="TIGR00185">
    <property type="entry name" value="tRNA_yibK_trmL"/>
    <property type="match status" value="1"/>
</dbReference>
<dbReference type="PANTHER" id="PTHR42971">
    <property type="entry name" value="TRNA (CYTIDINE(34)-2'-O)-METHYLTRANSFERASE"/>
    <property type="match status" value="1"/>
</dbReference>
<dbReference type="PANTHER" id="PTHR42971:SF1">
    <property type="entry name" value="TRNA (CYTIDINE(34)-2'-O)-METHYLTRANSFERASE"/>
    <property type="match status" value="1"/>
</dbReference>
<dbReference type="Pfam" id="PF00588">
    <property type="entry name" value="SpoU_methylase"/>
    <property type="match status" value="1"/>
</dbReference>
<dbReference type="PIRSF" id="PIRSF029256">
    <property type="entry name" value="SpoU_TrmH_prd"/>
    <property type="match status" value="1"/>
</dbReference>
<dbReference type="SUPFAM" id="SSF75217">
    <property type="entry name" value="alpha/beta knot"/>
    <property type="match status" value="1"/>
</dbReference>
<protein>
    <recommendedName>
        <fullName evidence="1">Putative tRNA (cytidine(34)-2'-O)-methyltransferase</fullName>
        <ecNumber evidence="1">2.1.1.207</ecNumber>
    </recommendedName>
    <alternativeName>
        <fullName>ORF3</fullName>
    </alternativeName>
    <alternativeName>
        <fullName evidence="1">tRNA (cytidine/uridine-2'-O-)-methyltransferase</fullName>
    </alternativeName>
</protein>
<accession>P32813</accession>
<proteinExistence type="inferred from homology"/>
<comment type="function">
    <text evidence="1">Could methylate the ribose at the nucleotide 34 wobble position in tRNA.</text>
</comment>
<comment type="catalytic activity">
    <reaction evidence="1">
        <text>cytidine(34) in tRNA + S-adenosyl-L-methionine = 2'-O-methylcytidine(34) in tRNA + S-adenosyl-L-homocysteine + H(+)</text>
        <dbReference type="Rhea" id="RHEA:43084"/>
        <dbReference type="Rhea" id="RHEA-COMP:10331"/>
        <dbReference type="Rhea" id="RHEA-COMP:10332"/>
        <dbReference type="ChEBI" id="CHEBI:15378"/>
        <dbReference type="ChEBI" id="CHEBI:57856"/>
        <dbReference type="ChEBI" id="CHEBI:59789"/>
        <dbReference type="ChEBI" id="CHEBI:74495"/>
        <dbReference type="ChEBI" id="CHEBI:82748"/>
        <dbReference type="EC" id="2.1.1.207"/>
    </reaction>
</comment>
<comment type="catalytic activity">
    <reaction evidence="1">
        <text>5-carboxymethylaminomethyluridine(34) in tRNA(Leu) + S-adenosyl-L-methionine = 5-carboxymethylaminomethyl-2'-O-methyluridine(34) in tRNA(Leu) + S-adenosyl-L-homocysteine + H(+)</text>
        <dbReference type="Rhea" id="RHEA:43088"/>
        <dbReference type="Rhea" id="RHEA-COMP:10333"/>
        <dbReference type="Rhea" id="RHEA-COMP:10334"/>
        <dbReference type="ChEBI" id="CHEBI:15378"/>
        <dbReference type="ChEBI" id="CHEBI:57856"/>
        <dbReference type="ChEBI" id="CHEBI:59789"/>
        <dbReference type="ChEBI" id="CHEBI:74508"/>
        <dbReference type="ChEBI" id="CHEBI:74511"/>
        <dbReference type="EC" id="2.1.1.207"/>
    </reaction>
</comment>
<comment type="subcellular location">
    <subcellularLocation>
        <location evidence="1">Cytoplasm</location>
    </subcellularLocation>
</comment>
<comment type="similarity">
    <text evidence="1">Belongs to the class IV-like SAM-binding methyltransferase superfamily. RNA methyltransferase TrmH family. TrmL subfamily.</text>
</comment>
<organism>
    <name type="scientific">Geobacillus stearothermophilus</name>
    <name type="common">Bacillus stearothermophilus</name>
    <dbReference type="NCBI Taxonomy" id="1422"/>
    <lineage>
        <taxon>Bacteria</taxon>
        <taxon>Bacillati</taxon>
        <taxon>Bacillota</taxon>
        <taxon>Bacilli</taxon>
        <taxon>Bacillales</taxon>
        <taxon>Anoxybacillaceae</taxon>
        <taxon>Geobacillus</taxon>
    </lineage>
</organism>
<evidence type="ECO:0000255" key="1">
    <source>
        <dbReference type="HAMAP-Rule" id="MF_01885"/>
    </source>
</evidence>
<reference key="1">
    <citation type="journal article" date="1992" name="Gene">
        <title>Cloning and characterization of a gene from Bacillus stearothermophilus var. non-diastaticus encoding a glycerol dehydrogenase.</title>
        <authorList>
            <person name="Mallinder P.R."/>
            <person name="Pritchard A."/>
            <person name="Moir A."/>
        </authorList>
    </citation>
    <scope>NUCLEOTIDE SEQUENCE [GENOMIC DNA]</scope>
    <source>
        <strain>DSM 2334 / Var. Non-diastaticus</strain>
    </source>
</reference>